<comment type="function">
    <text evidence="1">Catalyzes the reversible ATP-dependent phosphorylation of mevalonate 5-phosphate to produce mevalonate diphosphate and ADP, a key step in the mevalonic acid mediated biosynthesis of isopentenyl diphosphate and other polyisoprenoid metabolites.</text>
</comment>
<comment type="catalytic activity">
    <reaction evidence="1">
        <text>(R)-5-phosphomevalonate + ATP = (R)-5-diphosphomevalonate + ADP</text>
        <dbReference type="Rhea" id="RHEA:16341"/>
        <dbReference type="ChEBI" id="CHEBI:30616"/>
        <dbReference type="ChEBI" id="CHEBI:57557"/>
        <dbReference type="ChEBI" id="CHEBI:58146"/>
        <dbReference type="ChEBI" id="CHEBI:456216"/>
        <dbReference type="EC" id="2.7.4.2"/>
    </reaction>
    <physiologicalReaction direction="left-to-right" evidence="1">
        <dbReference type="Rhea" id="RHEA:16342"/>
    </physiologicalReaction>
    <physiologicalReaction direction="right-to-left" evidence="1">
        <dbReference type="Rhea" id="RHEA:16343"/>
    </physiologicalReaction>
</comment>
<comment type="pathway">
    <text evidence="2">Isoprenoid biosynthesis; isopentenyl diphosphate biosynthesis via mevalonate pathway; isopentenyl diphosphate from (R)-mevalonate: step 2/3.</text>
</comment>
<comment type="subunit">
    <text evidence="1">Monomer.</text>
</comment>
<comment type="subcellular location">
    <subcellularLocation>
        <location evidence="1">Cytoplasm</location>
        <location evidence="1">Cytosol</location>
    </subcellularLocation>
</comment>
<comment type="caution">
    <text evidence="1">Was originally thought to be located in the peroxisome. However, was later shown to be cytosolic.</text>
</comment>
<keyword id="KW-0067">ATP-binding</keyword>
<keyword id="KW-0152">Cholesterol biosynthesis</keyword>
<keyword id="KW-0153">Cholesterol metabolism</keyword>
<keyword id="KW-0963">Cytoplasm</keyword>
<keyword id="KW-0418">Kinase</keyword>
<keyword id="KW-0444">Lipid biosynthesis</keyword>
<keyword id="KW-0443">Lipid metabolism</keyword>
<keyword id="KW-0547">Nucleotide-binding</keyword>
<keyword id="KW-1185">Reference proteome</keyword>
<keyword id="KW-0752">Steroid biosynthesis</keyword>
<keyword id="KW-0753">Steroid metabolism</keyword>
<keyword id="KW-0756">Sterol biosynthesis</keyword>
<keyword id="KW-1207">Sterol metabolism</keyword>
<keyword id="KW-0808">Transferase</keyword>
<reference key="1">
    <citation type="submission" date="2006-01" db="EMBL/GenBank/DDBJ databases">
        <authorList>
            <consortium name="NIH - Mammalian Gene Collection (MGC) project"/>
        </authorList>
    </citation>
    <scope>NUCLEOTIDE SEQUENCE [LARGE SCALE MRNA]</scope>
    <source>
        <strain>Hereford</strain>
        <tissue>Testis</tissue>
    </source>
</reference>
<name>PMVK_BOVIN</name>
<proteinExistence type="evidence at transcript level"/>
<accession>Q2KIU2</accession>
<protein>
    <recommendedName>
        <fullName>Phosphomevalonate kinase</fullName>
        <shortName>PMKase</shortName>
        <ecNumber evidence="1">2.7.4.2</ecNumber>
    </recommendedName>
</protein>
<gene>
    <name type="primary">PMVK</name>
</gene>
<sequence>MAPLGGVPGLVLLFSGKRKSGKDFVTEALQSRLGADVCAILRLSGPLKEQYAQEHGLDFQRLMDASTYKEAYRSDMIRWGEEKRQADPGFFCRKIVEGVCQPVWLVSDTRRVSDIQWFQEAYGAVTQTVRVVATEESRQQRGWVFTPGVDDAESECGLDNFRTFDWVIENHGDEQHLEEQLEHLIEFIRSRL</sequence>
<dbReference type="EC" id="2.7.4.2" evidence="1"/>
<dbReference type="EMBL" id="BC112509">
    <property type="protein sequence ID" value="AAI12510.1"/>
    <property type="molecule type" value="mRNA"/>
</dbReference>
<dbReference type="RefSeq" id="NP_001039616.1">
    <property type="nucleotide sequence ID" value="NM_001046151.2"/>
</dbReference>
<dbReference type="SMR" id="Q2KIU2"/>
<dbReference type="FunCoup" id="Q2KIU2">
    <property type="interactions" value="791"/>
</dbReference>
<dbReference type="STRING" id="9913.ENSBTAP00000023689"/>
<dbReference type="PaxDb" id="9913-ENSBTAP00000023689"/>
<dbReference type="PeptideAtlas" id="Q2KIU2"/>
<dbReference type="GeneID" id="513533"/>
<dbReference type="KEGG" id="bta:513533"/>
<dbReference type="CTD" id="10654"/>
<dbReference type="eggNOG" id="ENOG502QYPQ">
    <property type="taxonomic scope" value="Eukaryota"/>
</dbReference>
<dbReference type="InParanoid" id="Q2KIU2"/>
<dbReference type="OrthoDB" id="2401875at2759"/>
<dbReference type="UniPathway" id="UPA00057">
    <property type="reaction ID" value="UER00099"/>
</dbReference>
<dbReference type="Proteomes" id="UP000009136">
    <property type="component" value="Unplaced"/>
</dbReference>
<dbReference type="GO" id="GO:0005829">
    <property type="term" value="C:cytosol"/>
    <property type="evidence" value="ECO:0000250"/>
    <property type="project" value="UniProtKB"/>
</dbReference>
<dbReference type="GO" id="GO:0005524">
    <property type="term" value="F:ATP binding"/>
    <property type="evidence" value="ECO:0007669"/>
    <property type="project" value="UniProtKB-KW"/>
</dbReference>
<dbReference type="GO" id="GO:0004631">
    <property type="term" value="F:phosphomevalonate kinase activity"/>
    <property type="evidence" value="ECO:0000318"/>
    <property type="project" value="GO_Central"/>
</dbReference>
<dbReference type="GO" id="GO:0006695">
    <property type="term" value="P:cholesterol biosynthetic process"/>
    <property type="evidence" value="ECO:0000318"/>
    <property type="project" value="GO_Central"/>
</dbReference>
<dbReference type="GO" id="GO:0019287">
    <property type="term" value="P:isopentenyl diphosphate biosynthetic process, mevalonate pathway"/>
    <property type="evidence" value="ECO:0000318"/>
    <property type="project" value="GO_Central"/>
</dbReference>
<dbReference type="FunFam" id="3.40.50.300:FF:001026">
    <property type="entry name" value="Phosphomevalonate kinase"/>
    <property type="match status" value="1"/>
</dbReference>
<dbReference type="Gene3D" id="3.40.50.300">
    <property type="entry name" value="P-loop containing nucleotide triphosphate hydrolases"/>
    <property type="match status" value="1"/>
</dbReference>
<dbReference type="InterPro" id="IPR027417">
    <property type="entry name" value="P-loop_NTPase"/>
</dbReference>
<dbReference type="InterPro" id="IPR005919">
    <property type="entry name" value="Pmev_kin_anim"/>
</dbReference>
<dbReference type="NCBIfam" id="TIGR01223">
    <property type="entry name" value="Pmev_kin_anim"/>
    <property type="match status" value="1"/>
</dbReference>
<dbReference type="PANTHER" id="PTHR13101">
    <property type="entry name" value="PHOSPHOMEVALONATE KINASE"/>
    <property type="match status" value="1"/>
</dbReference>
<dbReference type="PANTHER" id="PTHR13101:SF1">
    <property type="entry name" value="PHOSPHOMEVALONATE KINASE"/>
    <property type="match status" value="1"/>
</dbReference>
<dbReference type="Pfam" id="PF04275">
    <property type="entry name" value="P-mevalo_kinase"/>
    <property type="match status" value="1"/>
</dbReference>
<dbReference type="PIRSF" id="PIRSF036639">
    <property type="entry name" value="PMK_anim"/>
    <property type="match status" value="1"/>
</dbReference>
<dbReference type="SUPFAM" id="SSF52540">
    <property type="entry name" value="P-loop containing nucleoside triphosphate hydrolases"/>
    <property type="match status" value="1"/>
</dbReference>
<feature type="chain" id="PRO_0000239739" description="Phosphomevalonate kinase">
    <location>
        <begin position="1"/>
        <end position="192"/>
    </location>
</feature>
<feature type="binding site" evidence="1">
    <location>
        <begin position="17"/>
        <end position="23"/>
    </location>
    <ligand>
        <name>ATP</name>
        <dbReference type="ChEBI" id="CHEBI:30616"/>
    </ligand>
</feature>
<feature type="binding site" evidence="1">
    <location>
        <position position="141"/>
    </location>
    <ligand>
        <name>ATP</name>
        <dbReference type="ChEBI" id="CHEBI:30616"/>
    </ligand>
</feature>
<feature type="binding site" evidence="1">
    <location>
        <position position="170"/>
    </location>
    <ligand>
        <name>substrate</name>
    </ligand>
</feature>
<feature type="binding site" evidence="1">
    <location>
        <position position="171"/>
    </location>
    <ligand>
        <name>ATP</name>
        <dbReference type="ChEBI" id="CHEBI:30616"/>
    </ligand>
</feature>
<feature type="binding site" evidence="1">
    <location>
        <position position="180"/>
    </location>
    <ligand>
        <name>ATP</name>
        <dbReference type="ChEBI" id="CHEBI:30616"/>
    </ligand>
</feature>
<organism>
    <name type="scientific">Bos taurus</name>
    <name type="common">Bovine</name>
    <dbReference type="NCBI Taxonomy" id="9913"/>
    <lineage>
        <taxon>Eukaryota</taxon>
        <taxon>Metazoa</taxon>
        <taxon>Chordata</taxon>
        <taxon>Craniata</taxon>
        <taxon>Vertebrata</taxon>
        <taxon>Euteleostomi</taxon>
        <taxon>Mammalia</taxon>
        <taxon>Eutheria</taxon>
        <taxon>Laurasiatheria</taxon>
        <taxon>Artiodactyla</taxon>
        <taxon>Ruminantia</taxon>
        <taxon>Pecora</taxon>
        <taxon>Bovidae</taxon>
        <taxon>Bovinae</taxon>
        <taxon>Bos</taxon>
    </lineage>
</organism>
<evidence type="ECO:0000250" key="1">
    <source>
        <dbReference type="UniProtKB" id="Q15126"/>
    </source>
</evidence>
<evidence type="ECO:0000305" key="2"/>